<comment type="function">
    <text evidence="1">Catalyzes the anti-1,4-elimination of the C-3 phosphate and the C-6 proR hydrogen from 5-enolpyruvylshikimate-3-phosphate (EPSP) to yield chorismate, which is the branch point compound that serves as the starting substrate for the three terminal pathways of aromatic amino acid biosynthesis. This reaction introduces a second double bond into the aromatic ring system.</text>
</comment>
<comment type="catalytic activity">
    <reaction evidence="1">
        <text>5-O-(1-carboxyvinyl)-3-phosphoshikimate = chorismate + phosphate</text>
        <dbReference type="Rhea" id="RHEA:21020"/>
        <dbReference type="ChEBI" id="CHEBI:29748"/>
        <dbReference type="ChEBI" id="CHEBI:43474"/>
        <dbReference type="ChEBI" id="CHEBI:57701"/>
        <dbReference type="EC" id="4.2.3.5"/>
    </reaction>
</comment>
<comment type="cofactor">
    <cofactor evidence="1">
        <name>FMNH2</name>
        <dbReference type="ChEBI" id="CHEBI:57618"/>
    </cofactor>
    <text evidence="1">Reduced FMN (FMNH(2)).</text>
</comment>
<comment type="pathway">
    <text evidence="1">Metabolic intermediate biosynthesis; chorismate biosynthesis; chorismate from D-erythrose 4-phosphate and phosphoenolpyruvate: step 7/7.</text>
</comment>
<comment type="subunit">
    <text evidence="1">Homotetramer.</text>
</comment>
<comment type="similarity">
    <text evidence="1">Belongs to the chorismate synthase family.</text>
</comment>
<organism>
    <name type="scientific">Deinococcus geothermalis (strain DSM 11300 / CIP 105573 / AG-3a)</name>
    <dbReference type="NCBI Taxonomy" id="319795"/>
    <lineage>
        <taxon>Bacteria</taxon>
        <taxon>Thermotogati</taxon>
        <taxon>Deinococcota</taxon>
        <taxon>Deinococci</taxon>
        <taxon>Deinococcales</taxon>
        <taxon>Deinococcaceae</taxon>
        <taxon>Deinococcus</taxon>
    </lineage>
</organism>
<proteinExistence type="inferred from homology"/>
<name>AROC_DEIGD</name>
<keyword id="KW-0028">Amino-acid biosynthesis</keyword>
<keyword id="KW-0057">Aromatic amino acid biosynthesis</keyword>
<keyword id="KW-0274">FAD</keyword>
<keyword id="KW-0285">Flavoprotein</keyword>
<keyword id="KW-0288">FMN</keyword>
<keyword id="KW-0456">Lyase</keyword>
<keyword id="KW-0521">NADP</keyword>
<feature type="chain" id="PRO_0000256290" description="Chorismate synthase">
    <location>
        <begin position="1"/>
        <end position="382"/>
    </location>
</feature>
<feature type="binding site" evidence="1">
    <location>
        <position position="39"/>
    </location>
    <ligand>
        <name>NADP(+)</name>
        <dbReference type="ChEBI" id="CHEBI:58349"/>
    </ligand>
</feature>
<feature type="binding site" evidence="1">
    <location>
        <position position="45"/>
    </location>
    <ligand>
        <name>NADP(+)</name>
        <dbReference type="ChEBI" id="CHEBI:58349"/>
    </ligand>
</feature>
<feature type="binding site" evidence="1">
    <location>
        <begin position="128"/>
        <end position="130"/>
    </location>
    <ligand>
        <name>FMN</name>
        <dbReference type="ChEBI" id="CHEBI:58210"/>
    </ligand>
</feature>
<feature type="binding site" evidence="1">
    <location>
        <begin position="246"/>
        <end position="247"/>
    </location>
    <ligand>
        <name>FMN</name>
        <dbReference type="ChEBI" id="CHEBI:58210"/>
    </ligand>
</feature>
<feature type="binding site" evidence="1">
    <location>
        <position position="290"/>
    </location>
    <ligand>
        <name>FMN</name>
        <dbReference type="ChEBI" id="CHEBI:58210"/>
    </ligand>
</feature>
<feature type="binding site" evidence="1">
    <location>
        <begin position="305"/>
        <end position="309"/>
    </location>
    <ligand>
        <name>FMN</name>
        <dbReference type="ChEBI" id="CHEBI:58210"/>
    </ligand>
</feature>
<feature type="binding site" evidence="1">
    <location>
        <position position="331"/>
    </location>
    <ligand>
        <name>FMN</name>
        <dbReference type="ChEBI" id="CHEBI:58210"/>
    </ligand>
</feature>
<gene>
    <name evidence="1" type="primary">aroC</name>
    <name type="ordered locus">Dgeo_1730</name>
</gene>
<protein>
    <recommendedName>
        <fullName evidence="1">Chorismate synthase</fullName>
        <shortName evidence="1">CS</shortName>
        <ecNumber evidence="1">4.2.3.5</ecNumber>
    </recommendedName>
    <alternativeName>
        <fullName evidence="1">5-enolpyruvylshikimate-3-phosphate phospholyase</fullName>
    </alternativeName>
</protein>
<evidence type="ECO:0000255" key="1">
    <source>
        <dbReference type="HAMAP-Rule" id="MF_00300"/>
    </source>
</evidence>
<dbReference type="EC" id="4.2.3.5" evidence="1"/>
<dbReference type="EMBL" id="CP000359">
    <property type="protein sequence ID" value="ABF46025.1"/>
    <property type="molecule type" value="Genomic_DNA"/>
</dbReference>
<dbReference type="RefSeq" id="WP_011530856.1">
    <property type="nucleotide sequence ID" value="NC_008025.1"/>
</dbReference>
<dbReference type="SMR" id="Q1IXK9"/>
<dbReference type="STRING" id="319795.Dgeo_1730"/>
<dbReference type="KEGG" id="dge:Dgeo_1730"/>
<dbReference type="eggNOG" id="COG0082">
    <property type="taxonomic scope" value="Bacteria"/>
</dbReference>
<dbReference type="HOGENOM" id="CLU_034547_2_0_0"/>
<dbReference type="UniPathway" id="UPA00053">
    <property type="reaction ID" value="UER00090"/>
</dbReference>
<dbReference type="Proteomes" id="UP000002431">
    <property type="component" value="Chromosome"/>
</dbReference>
<dbReference type="GO" id="GO:0005829">
    <property type="term" value="C:cytosol"/>
    <property type="evidence" value="ECO:0007669"/>
    <property type="project" value="TreeGrafter"/>
</dbReference>
<dbReference type="GO" id="GO:0004107">
    <property type="term" value="F:chorismate synthase activity"/>
    <property type="evidence" value="ECO:0007669"/>
    <property type="project" value="UniProtKB-UniRule"/>
</dbReference>
<dbReference type="GO" id="GO:0010181">
    <property type="term" value="F:FMN binding"/>
    <property type="evidence" value="ECO:0007669"/>
    <property type="project" value="TreeGrafter"/>
</dbReference>
<dbReference type="GO" id="GO:0008652">
    <property type="term" value="P:amino acid biosynthetic process"/>
    <property type="evidence" value="ECO:0007669"/>
    <property type="project" value="UniProtKB-KW"/>
</dbReference>
<dbReference type="GO" id="GO:0009073">
    <property type="term" value="P:aromatic amino acid family biosynthetic process"/>
    <property type="evidence" value="ECO:0007669"/>
    <property type="project" value="UniProtKB-KW"/>
</dbReference>
<dbReference type="GO" id="GO:0009423">
    <property type="term" value="P:chorismate biosynthetic process"/>
    <property type="evidence" value="ECO:0007669"/>
    <property type="project" value="UniProtKB-UniRule"/>
</dbReference>
<dbReference type="CDD" id="cd07304">
    <property type="entry name" value="Chorismate_synthase"/>
    <property type="match status" value="1"/>
</dbReference>
<dbReference type="FunFam" id="3.60.150.10:FF:000002">
    <property type="entry name" value="Chorismate synthase"/>
    <property type="match status" value="1"/>
</dbReference>
<dbReference type="Gene3D" id="3.60.150.10">
    <property type="entry name" value="Chorismate synthase AroC"/>
    <property type="match status" value="1"/>
</dbReference>
<dbReference type="HAMAP" id="MF_00300">
    <property type="entry name" value="Chorismate_synth"/>
    <property type="match status" value="1"/>
</dbReference>
<dbReference type="InterPro" id="IPR000453">
    <property type="entry name" value="Chorismate_synth"/>
</dbReference>
<dbReference type="InterPro" id="IPR035904">
    <property type="entry name" value="Chorismate_synth_AroC_sf"/>
</dbReference>
<dbReference type="InterPro" id="IPR020541">
    <property type="entry name" value="Chorismate_synthase_CS"/>
</dbReference>
<dbReference type="NCBIfam" id="TIGR00033">
    <property type="entry name" value="aroC"/>
    <property type="match status" value="1"/>
</dbReference>
<dbReference type="NCBIfam" id="NF003793">
    <property type="entry name" value="PRK05382.1"/>
    <property type="match status" value="1"/>
</dbReference>
<dbReference type="PANTHER" id="PTHR21085">
    <property type="entry name" value="CHORISMATE SYNTHASE"/>
    <property type="match status" value="1"/>
</dbReference>
<dbReference type="PANTHER" id="PTHR21085:SF0">
    <property type="entry name" value="CHORISMATE SYNTHASE"/>
    <property type="match status" value="1"/>
</dbReference>
<dbReference type="Pfam" id="PF01264">
    <property type="entry name" value="Chorismate_synt"/>
    <property type="match status" value="1"/>
</dbReference>
<dbReference type="PIRSF" id="PIRSF001456">
    <property type="entry name" value="Chorismate_synth"/>
    <property type="match status" value="1"/>
</dbReference>
<dbReference type="SUPFAM" id="SSF103263">
    <property type="entry name" value="Chorismate synthase, AroC"/>
    <property type="match status" value="1"/>
</dbReference>
<dbReference type="PROSITE" id="PS00787">
    <property type="entry name" value="CHORISMATE_SYNTHASE_1"/>
    <property type="match status" value="1"/>
</dbReference>
<dbReference type="PROSITE" id="PS00788">
    <property type="entry name" value="CHORISMATE_SYNTHASE_2"/>
    <property type="match status" value="1"/>
</dbReference>
<sequence>MRYLTAGESHGPQLTAIIEGLPSQLPLGTSDINPWLRKRQGGYGRGRRMVIETDEAQILSGVRAGRTTGAPVTLVIANKDHRNWTEIMSPEPGGEPRKKALTAARPGHADLTGGIKYRHKDLRDVLERASARETAARVAVGAVALKLLSELGVEGANYVASLGGIETRAPFSWDQLDAIEASDLRTPDADAAAQMRERIDQAKKDGDTLGGILEVRFRGLPVGLGSYVHWDRKLDGRIAQACLSVQAMKGVEIGRAFENAVQPGSRVHDAVYYREGTYVRDTNSAGGLEAGMTNGEELIVRVAMKPIATLMKPLPTVNVVTHEAADAARERSDTTAVPAAGVILQCVIGWVLAEAMLEKFGGDTLPELQERVQAARAYAQAY</sequence>
<accession>Q1IXK9</accession>
<reference key="1">
    <citation type="submission" date="2006-04" db="EMBL/GenBank/DDBJ databases">
        <title>Complete sequence of chromosome of Deinococcus geothermalis DSM 11300.</title>
        <authorList>
            <person name="Copeland A."/>
            <person name="Lucas S."/>
            <person name="Lapidus A."/>
            <person name="Barry K."/>
            <person name="Detter J.C."/>
            <person name="Glavina del Rio T."/>
            <person name="Hammon N."/>
            <person name="Israni S."/>
            <person name="Dalin E."/>
            <person name="Tice H."/>
            <person name="Pitluck S."/>
            <person name="Brettin T."/>
            <person name="Bruce D."/>
            <person name="Han C."/>
            <person name="Tapia R."/>
            <person name="Saunders E."/>
            <person name="Gilna P."/>
            <person name="Schmutz J."/>
            <person name="Larimer F."/>
            <person name="Land M."/>
            <person name="Hauser L."/>
            <person name="Kyrpides N."/>
            <person name="Kim E."/>
            <person name="Daly M.J."/>
            <person name="Fredrickson J.K."/>
            <person name="Makarova K.S."/>
            <person name="Gaidamakova E.K."/>
            <person name="Zhai M."/>
            <person name="Richardson P."/>
        </authorList>
    </citation>
    <scope>NUCLEOTIDE SEQUENCE [LARGE SCALE GENOMIC DNA]</scope>
    <source>
        <strain>DSM 11300 / CIP 105573 / AG-3a</strain>
    </source>
</reference>